<accession>Q9I5U7</accession>
<keyword id="KW-0378">Hydrolase</keyword>
<keyword id="KW-1185">Reference proteome</keyword>
<protein>
    <recommendedName>
        <fullName>Bis(5'-nucleosyl)-tetraphosphatase, symmetrical</fullName>
        <ecNumber>3.6.1.41</ecNumber>
    </recommendedName>
    <alternativeName>
        <fullName>Ap4A hydrolase</fullName>
    </alternativeName>
    <alternativeName>
        <fullName>Diadenosine 5',5'''-P1,P4-tetraphosphate pyrophosphohydrolase</fullName>
    </alternativeName>
    <alternativeName>
        <fullName>Diadenosine tetraphosphatase</fullName>
    </alternativeName>
</protein>
<evidence type="ECO:0000250" key="1"/>
<evidence type="ECO:0000305" key="2"/>
<feature type="chain" id="PRO_0000198004" description="Bis(5'-nucleosyl)-tetraphosphatase, symmetrical">
    <location>
        <begin position="1"/>
        <end position="283"/>
    </location>
</feature>
<proteinExistence type="inferred from homology"/>
<name>APAH_PSEAE</name>
<organism>
    <name type="scientific">Pseudomonas aeruginosa (strain ATCC 15692 / DSM 22644 / CIP 104116 / JCM 14847 / LMG 12228 / 1C / PRS 101 / PAO1)</name>
    <dbReference type="NCBI Taxonomy" id="208964"/>
    <lineage>
        <taxon>Bacteria</taxon>
        <taxon>Pseudomonadati</taxon>
        <taxon>Pseudomonadota</taxon>
        <taxon>Gammaproteobacteria</taxon>
        <taxon>Pseudomonadales</taxon>
        <taxon>Pseudomonadaceae</taxon>
        <taxon>Pseudomonas</taxon>
    </lineage>
</organism>
<gene>
    <name type="primary">apaH</name>
    <name type="ordered locus">PA0590</name>
</gene>
<comment type="function">
    <text evidence="1">Hydrolyzes diadenosine 5',5'''-P1,P4-tetraphosphate to yield ADP.</text>
</comment>
<comment type="catalytic activity">
    <reaction>
        <text>P(1),P(4)-bis(5'-adenosyl) tetraphosphate + H2O = 2 ADP + 2 H(+)</text>
        <dbReference type="Rhea" id="RHEA:24252"/>
        <dbReference type="ChEBI" id="CHEBI:15377"/>
        <dbReference type="ChEBI" id="CHEBI:15378"/>
        <dbReference type="ChEBI" id="CHEBI:58141"/>
        <dbReference type="ChEBI" id="CHEBI:456216"/>
        <dbReference type="EC" id="3.6.1.41"/>
    </reaction>
</comment>
<comment type="similarity">
    <text evidence="2">Belongs to the Ap4A hydrolase family.</text>
</comment>
<dbReference type="EC" id="3.6.1.41"/>
<dbReference type="EMBL" id="AE004091">
    <property type="protein sequence ID" value="AAG03979.1"/>
    <property type="molecule type" value="Genomic_DNA"/>
</dbReference>
<dbReference type="PIR" id="F83571">
    <property type="entry name" value="F83571"/>
</dbReference>
<dbReference type="RefSeq" id="NP_249281.1">
    <property type="nucleotide sequence ID" value="NC_002516.2"/>
</dbReference>
<dbReference type="RefSeq" id="WP_003113213.1">
    <property type="nucleotide sequence ID" value="NZ_QZGE01000010.1"/>
</dbReference>
<dbReference type="SMR" id="Q9I5U7"/>
<dbReference type="FunCoup" id="Q9I5U7">
    <property type="interactions" value="237"/>
</dbReference>
<dbReference type="STRING" id="208964.PA0590"/>
<dbReference type="PaxDb" id="208964-PA0590"/>
<dbReference type="DNASU" id="880834"/>
<dbReference type="GeneID" id="880834"/>
<dbReference type="KEGG" id="pae:PA0590"/>
<dbReference type="PATRIC" id="fig|208964.12.peg.626"/>
<dbReference type="PseudoCAP" id="PA0590"/>
<dbReference type="HOGENOM" id="CLU_056184_2_0_6"/>
<dbReference type="InParanoid" id="Q9I5U7"/>
<dbReference type="OrthoDB" id="9807890at2"/>
<dbReference type="PhylomeDB" id="Q9I5U7"/>
<dbReference type="BioCyc" id="PAER208964:G1FZ6-597-MONOMER"/>
<dbReference type="Proteomes" id="UP000002438">
    <property type="component" value="Chromosome"/>
</dbReference>
<dbReference type="GO" id="GO:0005737">
    <property type="term" value="C:cytoplasm"/>
    <property type="evidence" value="ECO:0000318"/>
    <property type="project" value="GO_Central"/>
</dbReference>
<dbReference type="GO" id="GO:0008803">
    <property type="term" value="F:bis(5'-nucleosyl)-tetraphosphatase (symmetrical) activity"/>
    <property type="evidence" value="ECO:0000318"/>
    <property type="project" value="GO_Central"/>
</dbReference>
<dbReference type="GO" id="GO:0016791">
    <property type="term" value="F:phosphatase activity"/>
    <property type="evidence" value="ECO:0000318"/>
    <property type="project" value="GO_Central"/>
</dbReference>
<dbReference type="GO" id="GO:0110154">
    <property type="term" value="P:RNA decapping"/>
    <property type="evidence" value="ECO:0000318"/>
    <property type="project" value="GO_Central"/>
</dbReference>
<dbReference type="CDD" id="cd07422">
    <property type="entry name" value="MPP_ApaH"/>
    <property type="match status" value="1"/>
</dbReference>
<dbReference type="Gene3D" id="3.60.21.10">
    <property type="match status" value="1"/>
</dbReference>
<dbReference type="HAMAP" id="MF_00199">
    <property type="entry name" value="ApaH"/>
    <property type="match status" value="1"/>
</dbReference>
<dbReference type="InterPro" id="IPR004617">
    <property type="entry name" value="ApaH"/>
</dbReference>
<dbReference type="InterPro" id="IPR004843">
    <property type="entry name" value="Calcineurin-like_PHP_ApaH"/>
</dbReference>
<dbReference type="InterPro" id="IPR029052">
    <property type="entry name" value="Metallo-depent_PP-like"/>
</dbReference>
<dbReference type="NCBIfam" id="TIGR00668">
    <property type="entry name" value="apaH"/>
    <property type="match status" value="1"/>
</dbReference>
<dbReference type="NCBIfam" id="NF001204">
    <property type="entry name" value="PRK00166.1"/>
    <property type="match status" value="1"/>
</dbReference>
<dbReference type="PANTHER" id="PTHR40942">
    <property type="match status" value="1"/>
</dbReference>
<dbReference type="PANTHER" id="PTHR40942:SF4">
    <property type="entry name" value="CYTOCHROME C5"/>
    <property type="match status" value="1"/>
</dbReference>
<dbReference type="Pfam" id="PF00149">
    <property type="entry name" value="Metallophos"/>
    <property type="match status" value="1"/>
</dbReference>
<dbReference type="PIRSF" id="PIRSF000903">
    <property type="entry name" value="B5n-ttraPtase_sm"/>
    <property type="match status" value="1"/>
</dbReference>
<dbReference type="SUPFAM" id="SSF56300">
    <property type="entry name" value="Metallo-dependent phosphatases"/>
    <property type="match status" value="1"/>
</dbReference>
<reference key="1">
    <citation type="journal article" date="2000" name="Nature">
        <title>Complete genome sequence of Pseudomonas aeruginosa PAO1, an opportunistic pathogen.</title>
        <authorList>
            <person name="Stover C.K."/>
            <person name="Pham X.-Q.T."/>
            <person name="Erwin A.L."/>
            <person name="Mizoguchi S.D."/>
            <person name="Warrener P."/>
            <person name="Hickey M.J."/>
            <person name="Brinkman F.S.L."/>
            <person name="Hufnagle W.O."/>
            <person name="Kowalik D.J."/>
            <person name="Lagrou M."/>
            <person name="Garber R.L."/>
            <person name="Goltry L."/>
            <person name="Tolentino E."/>
            <person name="Westbrock-Wadman S."/>
            <person name="Yuan Y."/>
            <person name="Brody L.L."/>
            <person name="Coulter S.N."/>
            <person name="Folger K.R."/>
            <person name="Kas A."/>
            <person name="Larbig K."/>
            <person name="Lim R.M."/>
            <person name="Smith K.A."/>
            <person name="Spencer D.H."/>
            <person name="Wong G.K.-S."/>
            <person name="Wu Z."/>
            <person name="Paulsen I.T."/>
            <person name="Reizer J."/>
            <person name="Saier M.H. Jr."/>
            <person name="Hancock R.E.W."/>
            <person name="Lory S."/>
            <person name="Olson M.V."/>
        </authorList>
    </citation>
    <scope>NUCLEOTIDE SEQUENCE [LARGE SCALE GENOMIC DNA]</scope>
    <source>
        <strain>ATCC 15692 / DSM 22644 / CIP 104116 / JCM 14847 / LMG 12228 / 1C / PRS 101 / PAO1</strain>
    </source>
</reference>
<sequence>MAVYAVGDLQGCLDPLKCLLERVAFDPAKDRLWLVGDLVNRGPQSLETLRFLYAMRESVVSVLGNHDLHLLAVAHKSERLKKSDTLREILEAPDREPLLDWLRRLPLLHYDEQRKVALVHAGIPPQWSLEKARLRAAEVEQALRDDQRLPLFLDGMYGNEPAKWDKKLHGIDRLRVITNYFTRMRFCTEDGKLDLKSKEGLDTAPPGYAPWFSFPSRKTRGEKIIFGHWAALEGHCDEPGLFALDTGCVWGARMTLLNVDSGERLSCDCAEQRAPARPAATPA</sequence>